<gene>
    <name type="primary">SH3BGRL</name>
</gene>
<sequence>MVIRVYIASSSGSTAIKKKQQDVLGFLEANKIGFEEKDIAANEENRKWMRENVPENSRPATGYPLPPQIFNESQYRGDYDAFFEARENNAVYAFLGLTAPPGSKEAEVQAKQQA</sequence>
<feature type="chain" id="PRO_0000312643" description="Adapter SH3BGRL">
    <location>
        <begin position="1"/>
        <end position="114"/>
    </location>
</feature>
<feature type="region of interest" description="Required for interaction with HER2" evidence="1">
    <location>
        <begin position="13"/>
        <end position="50"/>
    </location>
</feature>
<feature type="region of interest" description="Required for interaction with PFN1, HER2, and ATG12" evidence="1">
    <location>
        <begin position="54"/>
        <end position="71"/>
    </location>
</feature>
<feature type="short sequence motif" description="SH3-binding" evidence="2">
    <location>
        <begin position="61"/>
        <end position="67"/>
    </location>
</feature>
<accession>Q5RFN7</accession>
<protein>
    <recommendedName>
        <fullName evidence="1">Adapter SH3BGRL</fullName>
    </recommendedName>
    <alternativeName>
        <fullName evidence="3">SH3 domain-binding glutamic acid-rich-like protein 1</fullName>
    </alternativeName>
</protein>
<keyword id="KW-1003">Cell membrane</keyword>
<keyword id="KW-0963">Cytoplasm</keyword>
<keyword id="KW-0472">Membrane</keyword>
<keyword id="KW-1185">Reference proteome</keyword>
<keyword id="KW-0729">SH3-binding</keyword>
<name>SH3L1_PONAB</name>
<reference key="1">
    <citation type="submission" date="2004-11" db="EMBL/GenBank/DDBJ databases">
        <authorList>
            <consortium name="The German cDNA consortium"/>
        </authorList>
    </citation>
    <scope>NUCLEOTIDE SEQUENCE [LARGE SCALE MRNA]</scope>
    <source>
        <tissue>Kidney</tissue>
    </source>
</reference>
<proteinExistence type="inferred from homology"/>
<comment type="function">
    <text evidence="1">Appears to function as an adapter protein that bridges proteins together or proteins with mRNAs. May function as a ubiquitin ligase-substrate adapter. Additionally, associates with translating cytoplasmic ribosomes and may promote the expression of specific mRNAs.</text>
</comment>
<comment type="subunit">
    <text evidence="1">Monomer. Interacts with PFN1/Profilin-1. Interacts with ERBB2. Interacts with ATG12. Interacts with BECN1. Interacts with translating ribosomes.</text>
</comment>
<comment type="subcellular location">
    <subcellularLocation>
        <location evidence="1">Cytoplasm</location>
        <location evidence="1">Cytosol</location>
    </subcellularLocation>
    <subcellularLocation>
        <location evidence="1">Cell membrane</location>
    </subcellularLocation>
</comment>
<comment type="domain">
    <text evidence="1">The SH3-binding domain is buried in the tertiary structure, and it therefore unclear whether it directly mediates protein-binding.</text>
</comment>
<comment type="similarity">
    <text evidence="3">Belongs to the SH3BGR family.</text>
</comment>
<organism>
    <name type="scientific">Pongo abelii</name>
    <name type="common">Sumatran orangutan</name>
    <name type="synonym">Pongo pygmaeus abelii</name>
    <dbReference type="NCBI Taxonomy" id="9601"/>
    <lineage>
        <taxon>Eukaryota</taxon>
        <taxon>Metazoa</taxon>
        <taxon>Chordata</taxon>
        <taxon>Craniata</taxon>
        <taxon>Vertebrata</taxon>
        <taxon>Euteleostomi</taxon>
        <taxon>Mammalia</taxon>
        <taxon>Eutheria</taxon>
        <taxon>Euarchontoglires</taxon>
        <taxon>Primates</taxon>
        <taxon>Haplorrhini</taxon>
        <taxon>Catarrhini</taxon>
        <taxon>Hominidae</taxon>
        <taxon>Pongo</taxon>
    </lineage>
</organism>
<evidence type="ECO:0000250" key="1">
    <source>
        <dbReference type="UniProtKB" id="O75368"/>
    </source>
</evidence>
<evidence type="ECO:0000255" key="2"/>
<evidence type="ECO:0000305" key="3"/>
<dbReference type="EMBL" id="CR857116">
    <property type="protein sequence ID" value="CAH89420.1"/>
    <property type="molecule type" value="mRNA"/>
</dbReference>
<dbReference type="RefSeq" id="NP_001124600.1">
    <property type="nucleotide sequence ID" value="NM_001131128.2"/>
</dbReference>
<dbReference type="SMR" id="Q5RFN7"/>
<dbReference type="FunCoup" id="Q5RFN7">
    <property type="interactions" value="1432"/>
</dbReference>
<dbReference type="STRING" id="9601.ENSPPYP00000022956"/>
<dbReference type="Ensembl" id="ENSPPYT00000023924.3">
    <property type="protein sequence ID" value="ENSPPYP00000022956.2"/>
    <property type="gene ID" value="ENSPPYG00000020509.3"/>
</dbReference>
<dbReference type="GeneID" id="100171436"/>
<dbReference type="KEGG" id="pon:100171436"/>
<dbReference type="CTD" id="6451"/>
<dbReference type="eggNOG" id="KOG4023">
    <property type="taxonomic scope" value="Eukaryota"/>
</dbReference>
<dbReference type="GeneTree" id="ENSGT00940000156017"/>
<dbReference type="HOGENOM" id="CLU_084862_3_0_1"/>
<dbReference type="InParanoid" id="Q5RFN7"/>
<dbReference type="OMA" id="NEKEFMQ"/>
<dbReference type="OrthoDB" id="9932926at2759"/>
<dbReference type="TreeFam" id="TF105574"/>
<dbReference type="Proteomes" id="UP000001595">
    <property type="component" value="Chromosome X"/>
</dbReference>
<dbReference type="GO" id="GO:0005829">
    <property type="term" value="C:cytosol"/>
    <property type="evidence" value="ECO:0007669"/>
    <property type="project" value="UniProtKB-SubCell"/>
</dbReference>
<dbReference type="GO" id="GO:0005886">
    <property type="term" value="C:plasma membrane"/>
    <property type="evidence" value="ECO:0007669"/>
    <property type="project" value="UniProtKB-SubCell"/>
</dbReference>
<dbReference type="GO" id="GO:0140517">
    <property type="term" value="F:protein-RNA adaptor activity"/>
    <property type="evidence" value="ECO:0007669"/>
    <property type="project" value="Ensembl"/>
</dbReference>
<dbReference type="GO" id="GO:0017124">
    <property type="term" value="F:SH3 domain binding"/>
    <property type="evidence" value="ECO:0007669"/>
    <property type="project" value="UniProtKB-KW"/>
</dbReference>
<dbReference type="GO" id="GO:1990756">
    <property type="term" value="F:ubiquitin-like ligase-substrate adaptor activity"/>
    <property type="evidence" value="ECO:0007669"/>
    <property type="project" value="Ensembl"/>
</dbReference>
<dbReference type="GO" id="GO:1904690">
    <property type="term" value="P:positive regulation of cytoplasmic translational initiation"/>
    <property type="evidence" value="ECO:0007669"/>
    <property type="project" value="Ensembl"/>
</dbReference>
<dbReference type="GO" id="GO:0043161">
    <property type="term" value="P:proteasome-mediated ubiquitin-dependent protein catabolic process"/>
    <property type="evidence" value="ECO:0007669"/>
    <property type="project" value="Ensembl"/>
</dbReference>
<dbReference type="CDD" id="cd03030">
    <property type="entry name" value="GRX_SH3BGR"/>
    <property type="match status" value="1"/>
</dbReference>
<dbReference type="FunFam" id="3.40.30.10:FF:000065">
    <property type="entry name" value="SH3 domain-binding glutamic acid-rich-like protein"/>
    <property type="match status" value="1"/>
</dbReference>
<dbReference type="Gene3D" id="3.40.30.10">
    <property type="entry name" value="Glutaredoxin"/>
    <property type="match status" value="1"/>
</dbReference>
<dbReference type="InterPro" id="IPR006993">
    <property type="entry name" value="Glut_rich_SH3-bd"/>
</dbReference>
<dbReference type="InterPro" id="IPR051033">
    <property type="entry name" value="SH3BGR"/>
</dbReference>
<dbReference type="InterPro" id="IPR036249">
    <property type="entry name" value="Thioredoxin-like_sf"/>
</dbReference>
<dbReference type="PANTHER" id="PTHR12232:SF5">
    <property type="entry name" value="ADAPTER SH3BGRL"/>
    <property type="match status" value="1"/>
</dbReference>
<dbReference type="PANTHER" id="PTHR12232">
    <property type="entry name" value="SH3 DOMAIN-BINDING GLUTAMIC ACID-RICH-LIKE PROTEIN"/>
    <property type="match status" value="1"/>
</dbReference>
<dbReference type="Pfam" id="PF04908">
    <property type="entry name" value="SH3BGR"/>
    <property type="match status" value="1"/>
</dbReference>
<dbReference type="PIRSF" id="PIRSF008142">
    <property type="entry name" value="SH3-bind_E-rich_L"/>
    <property type="match status" value="1"/>
</dbReference>
<dbReference type="SUPFAM" id="SSF52833">
    <property type="entry name" value="Thioredoxin-like"/>
    <property type="match status" value="1"/>
</dbReference>